<gene>
    <name type="primary">Lrrc25</name>
    <name type="synonym">Mapa</name>
</gene>
<evidence type="ECO:0000250" key="1">
    <source>
        <dbReference type="UniProtKB" id="Q8N386"/>
    </source>
</evidence>
<evidence type="ECO:0000255" key="2"/>
<evidence type="ECO:0000256" key="3">
    <source>
        <dbReference type="SAM" id="MobiDB-lite"/>
    </source>
</evidence>
<evidence type="ECO:0007744" key="4">
    <source>
    </source>
</evidence>
<evidence type="ECO:0007744" key="5">
    <source>
    </source>
</evidence>
<evidence type="ECO:0007744" key="6">
    <source>
    </source>
</evidence>
<sequence length="297" mass="32673">MGSIRTRLLWLCLLMLLALLHKSGSQDLTCMVHPSRVDWTQTFNGTCLNFSGLGLSLPRSPLQASHAQVLDLSKNGLQVLPGAFFDKLEKLQTLIVTHNQLDSVDRSLALRCDLELKADCSCGLASWYALRQNCSGQQQLLCLHPATEAPRNLSTFLQVSCPPSWGPGTIGALVAGTISLAVAVSGSVLAWRLLRRRRRASEHSLSKAQMSPHDIPKPVTDFLPRYSSRRPGPKAPDSPPSRFTMDYENVFIGQPAEDCSWSAARNSPSGDSDCYMNYRSVDQDSQPVYCNLESLGR</sequence>
<comment type="function">
    <text evidence="1">Plays a role in the inhibition of RLR-mediated type I interferon signaling pathway by targeting RIGI for autophagic degradation. Interacts specifically with ISG15-associated RIGI to promote interaction between RIGI and the autophagic cargo receptor p62/SQSTM1 to mediate RIGI degradation via selective autophagy. Plays also a role in the inhibition of NF-kappa-B signaling pathway and inflammatory response by promoting the degradation of p65/RELA.</text>
</comment>
<comment type="subunit">
    <text evidence="1">Interacts with RIGI. Interacts with SQSTM1. Interacts with p65/RELA; this interaction promotes the degradation of RELA through autophagy.</text>
</comment>
<comment type="subcellular location">
    <subcellularLocation>
        <location evidence="1">Membrane</location>
        <topology evidence="1">Single-pass type I membrane protein</topology>
    </subcellularLocation>
    <subcellularLocation>
        <location evidence="1">Cytoplasm</location>
    </subcellularLocation>
</comment>
<reference key="1">
    <citation type="journal article" date="2002" name="Blood">
        <title>Subtractive hybridization reveals the expression of immunoglobulin like transcript 7, Eph-B1, granzyme B, and 3 novel transcripts in human plasmacytoid dendritic cells.</title>
        <authorList>
            <person name="Rissoan M.-C."/>
            <person name="Duhen T."/>
            <person name="Bridon J.-M."/>
            <person name="Bendriss-Vermare N."/>
            <person name="Peronne C."/>
            <person name="de Saint-Vis B.M."/>
            <person name="Briere F."/>
            <person name="Bates E.E.M."/>
        </authorList>
    </citation>
    <scope>NUCLEOTIDE SEQUENCE [MRNA]</scope>
    <source>
        <tissue>Plasmacytoid dendritic cell</tissue>
    </source>
</reference>
<reference key="2">
    <citation type="journal article" date="2005" name="Science">
        <title>The transcriptional landscape of the mammalian genome.</title>
        <authorList>
            <person name="Carninci P."/>
            <person name="Kasukawa T."/>
            <person name="Katayama S."/>
            <person name="Gough J."/>
            <person name="Frith M.C."/>
            <person name="Maeda N."/>
            <person name="Oyama R."/>
            <person name="Ravasi T."/>
            <person name="Lenhard B."/>
            <person name="Wells C."/>
            <person name="Kodzius R."/>
            <person name="Shimokawa K."/>
            <person name="Bajic V.B."/>
            <person name="Brenner S.E."/>
            <person name="Batalov S."/>
            <person name="Forrest A.R."/>
            <person name="Zavolan M."/>
            <person name="Davis M.J."/>
            <person name="Wilming L.G."/>
            <person name="Aidinis V."/>
            <person name="Allen J.E."/>
            <person name="Ambesi-Impiombato A."/>
            <person name="Apweiler R."/>
            <person name="Aturaliya R.N."/>
            <person name="Bailey T.L."/>
            <person name="Bansal M."/>
            <person name="Baxter L."/>
            <person name="Beisel K.W."/>
            <person name="Bersano T."/>
            <person name="Bono H."/>
            <person name="Chalk A.M."/>
            <person name="Chiu K.P."/>
            <person name="Choudhary V."/>
            <person name="Christoffels A."/>
            <person name="Clutterbuck D.R."/>
            <person name="Crowe M.L."/>
            <person name="Dalla E."/>
            <person name="Dalrymple B.P."/>
            <person name="de Bono B."/>
            <person name="Della Gatta G."/>
            <person name="di Bernardo D."/>
            <person name="Down T."/>
            <person name="Engstrom P."/>
            <person name="Fagiolini M."/>
            <person name="Faulkner G."/>
            <person name="Fletcher C.F."/>
            <person name="Fukushima T."/>
            <person name="Furuno M."/>
            <person name="Futaki S."/>
            <person name="Gariboldi M."/>
            <person name="Georgii-Hemming P."/>
            <person name="Gingeras T.R."/>
            <person name="Gojobori T."/>
            <person name="Green R.E."/>
            <person name="Gustincich S."/>
            <person name="Harbers M."/>
            <person name="Hayashi Y."/>
            <person name="Hensch T.K."/>
            <person name="Hirokawa N."/>
            <person name="Hill D."/>
            <person name="Huminiecki L."/>
            <person name="Iacono M."/>
            <person name="Ikeo K."/>
            <person name="Iwama A."/>
            <person name="Ishikawa T."/>
            <person name="Jakt M."/>
            <person name="Kanapin A."/>
            <person name="Katoh M."/>
            <person name="Kawasawa Y."/>
            <person name="Kelso J."/>
            <person name="Kitamura H."/>
            <person name="Kitano H."/>
            <person name="Kollias G."/>
            <person name="Krishnan S.P."/>
            <person name="Kruger A."/>
            <person name="Kummerfeld S.K."/>
            <person name="Kurochkin I.V."/>
            <person name="Lareau L.F."/>
            <person name="Lazarevic D."/>
            <person name="Lipovich L."/>
            <person name="Liu J."/>
            <person name="Liuni S."/>
            <person name="McWilliam S."/>
            <person name="Madan Babu M."/>
            <person name="Madera M."/>
            <person name="Marchionni L."/>
            <person name="Matsuda H."/>
            <person name="Matsuzawa S."/>
            <person name="Miki H."/>
            <person name="Mignone F."/>
            <person name="Miyake S."/>
            <person name="Morris K."/>
            <person name="Mottagui-Tabar S."/>
            <person name="Mulder N."/>
            <person name="Nakano N."/>
            <person name="Nakauchi H."/>
            <person name="Ng P."/>
            <person name="Nilsson R."/>
            <person name="Nishiguchi S."/>
            <person name="Nishikawa S."/>
            <person name="Nori F."/>
            <person name="Ohara O."/>
            <person name="Okazaki Y."/>
            <person name="Orlando V."/>
            <person name="Pang K.C."/>
            <person name="Pavan W.J."/>
            <person name="Pavesi G."/>
            <person name="Pesole G."/>
            <person name="Petrovsky N."/>
            <person name="Piazza S."/>
            <person name="Reed J."/>
            <person name="Reid J.F."/>
            <person name="Ring B.Z."/>
            <person name="Ringwald M."/>
            <person name="Rost B."/>
            <person name="Ruan Y."/>
            <person name="Salzberg S.L."/>
            <person name="Sandelin A."/>
            <person name="Schneider C."/>
            <person name="Schoenbach C."/>
            <person name="Sekiguchi K."/>
            <person name="Semple C.A."/>
            <person name="Seno S."/>
            <person name="Sessa L."/>
            <person name="Sheng Y."/>
            <person name="Shibata Y."/>
            <person name="Shimada H."/>
            <person name="Shimada K."/>
            <person name="Silva D."/>
            <person name="Sinclair B."/>
            <person name="Sperling S."/>
            <person name="Stupka E."/>
            <person name="Sugiura K."/>
            <person name="Sultana R."/>
            <person name="Takenaka Y."/>
            <person name="Taki K."/>
            <person name="Tammoja K."/>
            <person name="Tan S.L."/>
            <person name="Tang S."/>
            <person name="Taylor M.S."/>
            <person name="Tegner J."/>
            <person name="Teichmann S.A."/>
            <person name="Ueda H.R."/>
            <person name="van Nimwegen E."/>
            <person name="Verardo R."/>
            <person name="Wei C.L."/>
            <person name="Yagi K."/>
            <person name="Yamanishi H."/>
            <person name="Zabarovsky E."/>
            <person name="Zhu S."/>
            <person name="Zimmer A."/>
            <person name="Hide W."/>
            <person name="Bult C."/>
            <person name="Grimmond S.M."/>
            <person name="Teasdale R.D."/>
            <person name="Liu E.T."/>
            <person name="Brusic V."/>
            <person name="Quackenbush J."/>
            <person name="Wahlestedt C."/>
            <person name="Mattick J.S."/>
            <person name="Hume D.A."/>
            <person name="Kai C."/>
            <person name="Sasaki D."/>
            <person name="Tomaru Y."/>
            <person name="Fukuda S."/>
            <person name="Kanamori-Katayama M."/>
            <person name="Suzuki M."/>
            <person name="Aoki J."/>
            <person name="Arakawa T."/>
            <person name="Iida J."/>
            <person name="Imamura K."/>
            <person name="Itoh M."/>
            <person name="Kato T."/>
            <person name="Kawaji H."/>
            <person name="Kawagashira N."/>
            <person name="Kawashima T."/>
            <person name="Kojima M."/>
            <person name="Kondo S."/>
            <person name="Konno H."/>
            <person name="Nakano K."/>
            <person name="Ninomiya N."/>
            <person name="Nishio T."/>
            <person name="Okada M."/>
            <person name="Plessy C."/>
            <person name="Shibata K."/>
            <person name="Shiraki T."/>
            <person name="Suzuki S."/>
            <person name="Tagami M."/>
            <person name="Waki K."/>
            <person name="Watahiki A."/>
            <person name="Okamura-Oho Y."/>
            <person name="Suzuki H."/>
            <person name="Kawai J."/>
            <person name="Hayashizaki Y."/>
        </authorList>
    </citation>
    <scope>NUCLEOTIDE SEQUENCE [LARGE SCALE MRNA]</scope>
    <source>
        <strain>C57BL/6J</strain>
        <strain>NOD</strain>
        <tissue>Aorta</tissue>
        <tissue>Spleen</tissue>
        <tissue>Vein</tissue>
    </source>
</reference>
<reference key="3">
    <citation type="journal article" date="2007" name="J. Immunol.">
        <title>Quantitative time-resolved phosphoproteomic analysis of mast cell signaling.</title>
        <authorList>
            <person name="Cao L."/>
            <person name="Yu K."/>
            <person name="Banh C."/>
            <person name="Nguyen V."/>
            <person name="Ritz A."/>
            <person name="Raphael B.J."/>
            <person name="Kawakami Y."/>
            <person name="Kawakami T."/>
            <person name="Salomon A.R."/>
        </authorList>
    </citation>
    <scope>PHOSPHORYLATION [LARGE SCALE ANALYSIS] AT TYR-289</scope>
    <scope>IDENTIFICATION BY MASS SPECTROMETRY [LARGE SCALE ANALYSIS]</scope>
    <source>
        <tissue>Mast cell</tissue>
    </source>
</reference>
<reference key="4">
    <citation type="journal article" date="2009" name="Immunity">
        <title>The phagosomal proteome in interferon-gamma-activated macrophages.</title>
        <authorList>
            <person name="Trost M."/>
            <person name="English L."/>
            <person name="Lemieux S."/>
            <person name="Courcelles M."/>
            <person name="Desjardins M."/>
            <person name="Thibault P."/>
        </authorList>
    </citation>
    <scope>PHOSPHORYLATION [LARGE SCALE ANALYSIS] AT SER-211; SER-238; SER-267 AND TYR-289</scope>
    <scope>IDENTIFICATION BY MASS SPECTROMETRY [LARGE SCALE ANALYSIS]</scope>
</reference>
<reference key="5">
    <citation type="journal article" date="2010" name="Cell">
        <title>A tissue-specific atlas of mouse protein phosphorylation and expression.</title>
        <authorList>
            <person name="Huttlin E.L."/>
            <person name="Jedrychowski M.P."/>
            <person name="Elias J.E."/>
            <person name="Goswami T."/>
            <person name="Rad R."/>
            <person name="Beausoleil S.A."/>
            <person name="Villen J."/>
            <person name="Haas W."/>
            <person name="Sowa M.E."/>
            <person name="Gygi S.P."/>
        </authorList>
    </citation>
    <scope>PHOSPHORYLATION [LARGE SCALE ANALYSIS] AT SER-267</scope>
    <scope>IDENTIFICATION BY MASS SPECTROMETRY [LARGE SCALE ANALYSIS]</scope>
    <source>
        <tissue>Spleen</tissue>
    </source>
</reference>
<dbReference type="EMBL" id="AJ422149">
    <property type="protein sequence ID" value="CAD19532.1"/>
    <property type="molecule type" value="mRNA"/>
</dbReference>
<dbReference type="EMBL" id="AK080022">
    <property type="protein sequence ID" value="BAC37807.1"/>
    <property type="molecule type" value="mRNA"/>
</dbReference>
<dbReference type="EMBL" id="AK171924">
    <property type="protein sequence ID" value="BAE42733.1"/>
    <property type="molecule type" value="mRNA"/>
</dbReference>
<dbReference type="CCDS" id="CCDS22375.1"/>
<dbReference type="RefSeq" id="NP_694714.1">
    <property type="nucleotide sequence ID" value="NM_153074.4"/>
</dbReference>
<dbReference type="RefSeq" id="XP_036009747.1">
    <property type="nucleotide sequence ID" value="XM_036153854.1"/>
</dbReference>
<dbReference type="FunCoup" id="Q8K1T1">
    <property type="interactions" value="136"/>
</dbReference>
<dbReference type="STRING" id="10090.ENSMUSP00000049686"/>
<dbReference type="GlyCosmos" id="Q8K1T1">
    <property type="glycosylation" value="4 sites, No reported glycans"/>
</dbReference>
<dbReference type="GlyGen" id="Q8K1T1">
    <property type="glycosylation" value="4 sites"/>
</dbReference>
<dbReference type="iPTMnet" id="Q8K1T1"/>
<dbReference type="PhosphoSitePlus" id="Q8K1T1"/>
<dbReference type="jPOST" id="Q8K1T1"/>
<dbReference type="PaxDb" id="10090-ENSMUSP00000049686"/>
<dbReference type="ProteomicsDB" id="287264"/>
<dbReference type="Antibodypedia" id="28033">
    <property type="antibodies" value="352 antibodies from 18 providers"/>
</dbReference>
<dbReference type="Ensembl" id="ENSMUST00000052437.6">
    <property type="protein sequence ID" value="ENSMUSP00000049686.4"/>
    <property type="gene ID" value="ENSMUSG00000049988.6"/>
</dbReference>
<dbReference type="GeneID" id="211228"/>
<dbReference type="KEGG" id="mmu:211228"/>
<dbReference type="UCSC" id="uc009maz.1">
    <property type="organism name" value="mouse"/>
</dbReference>
<dbReference type="AGR" id="MGI:2445284"/>
<dbReference type="CTD" id="126364"/>
<dbReference type="MGI" id="MGI:2445284">
    <property type="gene designation" value="Lrrc25"/>
</dbReference>
<dbReference type="VEuPathDB" id="HostDB:ENSMUSG00000049988"/>
<dbReference type="eggNOG" id="ENOG502S9V5">
    <property type="taxonomic scope" value="Eukaryota"/>
</dbReference>
<dbReference type="GeneTree" id="ENSGT00390000004001"/>
<dbReference type="HOGENOM" id="CLU_906014_0_0_1"/>
<dbReference type="InParanoid" id="Q8K1T1"/>
<dbReference type="OMA" id="WHNVSAF"/>
<dbReference type="OrthoDB" id="9835318at2759"/>
<dbReference type="PhylomeDB" id="Q8K1T1"/>
<dbReference type="TreeFam" id="TF337414"/>
<dbReference type="BioGRID-ORCS" id="211228">
    <property type="hits" value="3 hits in 77 CRISPR screens"/>
</dbReference>
<dbReference type="PRO" id="PR:Q8K1T1"/>
<dbReference type="Proteomes" id="UP000000589">
    <property type="component" value="Chromosome 8"/>
</dbReference>
<dbReference type="RNAct" id="Q8K1T1">
    <property type="molecule type" value="protein"/>
</dbReference>
<dbReference type="Bgee" id="ENSMUSG00000049988">
    <property type="expression patterns" value="Expressed in granulocyte and 46 other cell types or tissues"/>
</dbReference>
<dbReference type="ExpressionAtlas" id="Q8K1T1">
    <property type="expression patterns" value="baseline and differential"/>
</dbReference>
<dbReference type="GO" id="GO:0005737">
    <property type="term" value="C:cytoplasm"/>
    <property type="evidence" value="ECO:0007669"/>
    <property type="project" value="UniProtKB-SubCell"/>
</dbReference>
<dbReference type="GO" id="GO:0016020">
    <property type="term" value="C:membrane"/>
    <property type="evidence" value="ECO:0007669"/>
    <property type="project" value="UniProtKB-SubCell"/>
</dbReference>
<dbReference type="GO" id="GO:0007249">
    <property type="term" value="P:canonical NF-kappaB signal transduction"/>
    <property type="evidence" value="ECO:0000315"/>
    <property type="project" value="MGI"/>
</dbReference>
<dbReference type="GO" id="GO:0002248">
    <property type="term" value="P:connective tissue replacement involved in inflammatory response wound healing"/>
    <property type="evidence" value="ECO:0000315"/>
    <property type="project" value="MGI"/>
</dbReference>
<dbReference type="GO" id="GO:0010467">
    <property type="term" value="P:gene expression"/>
    <property type="evidence" value="ECO:0000315"/>
    <property type="project" value="MGI"/>
</dbReference>
<dbReference type="GO" id="GO:0007507">
    <property type="term" value="P:heart development"/>
    <property type="evidence" value="ECO:0000315"/>
    <property type="project" value="MGI"/>
</dbReference>
<dbReference type="GO" id="GO:0006954">
    <property type="term" value="P:inflammatory response"/>
    <property type="evidence" value="ECO:0000315"/>
    <property type="project" value="MGI"/>
</dbReference>
<dbReference type="GO" id="GO:1990776">
    <property type="term" value="P:response to angiotensin"/>
    <property type="evidence" value="ECO:0000315"/>
    <property type="project" value="MGI"/>
</dbReference>
<dbReference type="GO" id="GO:0051599">
    <property type="term" value="P:response to hydrostatic pressure"/>
    <property type="evidence" value="ECO:0000315"/>
    <property type="project" value="MGI"/>
</dbReference>
<dbReference type="GO" id="GO:0071559">
    <property type="term" value="P:response to transforming growth factor beta"/>
    <property type="evidence" value="ECO:0000315"/>
    <property type="project" value="MGI"/>
</dbReference>
<dbReference type="Gene3D" id="3.80.10.10">
    <property type="entry name" value="Ribonuclease Inhibitor"/>
    <property type="match status" value="1"/>
</dbReference>
<dbReference type="InterPro" id="IPR001611">
    <property type="entry name" value="Leu-rich_rpt"/>
</dbReference>
<dbReference type="InterPro" id="IPR032675">
    <property type="entry name" value="LRR_dom_sf"/>
</dbReference>
<dbReference type="InterPro" id="IPR039243">
    <property type="entry name" value="LRRC25"/>
</dbReference>
<dbReference type="PANTHER" id="PTHR20878">
    <property type="entry name" value="LEUCINE-RICH REPEAT CONTAINING PROTEIN 25"/>
    <property type="match status" value="1"/>
</dbReference>
<dbReference type="PANTHER" id="PTHR20878:SF0">
    <property type="entry name" value="LEUCINE-RICH REPEAT-CONTAINING PROTEIN 25"/>
    <property type="match status" value="1"/>
</dbReference>
<dbReference type="Pfam" id="PF13855">
    <property type="entry name" value="LRR_8"/>
    <property type="match status" value="1"/>
</dbReference>
<dbReference type="SUPFAM" id="SSF52058">
    <property type="entry name" value="L domain-like"/>
    <property type="match status" value="1"/>
</dbReference>
<name>LRC25_MOUSE</name>
<organism>
    <name type="scientific">Mus musculus</name>
    <name type="common">Mouse</name>
    <dbReference type="NCBI Taxonomy" id="10090"/>
    <lineage>
        <taxon>Eukaryota</taxon>
        <taxon>Metazoa</taxon>
        <taxon>Chordata</taxon>
        <taxon>Craniata</taxon>
        <taxon>Vertebrata</taxon>
        <taxon>Euteleostomi</taxon>
        <taxon>Mammalia</taxon>
        <taxon>Eutheria</taxon>
        <taxon>Euarchontoglires</taxon>
        <taxon>Glires</taxon>
        <taxon>Rodentia</taxon>
        <taxon>Myomorpha</taxon>
        <taxon>Muroidea</taxon>
        <taxon>Muridae</taxon>
        <taxon>Murinae</taxon>
        <taxon>Mus</taxon>
        <taxon>Mus</taxon>
    </lineage>
</organism>
<keyword id="KW-0963">Cytoplasm</keyword>
<keyword id="KW-0325">Glycoprotein</keyword>
<keyword id="KW-0433">Leucine-rich repeat</keyword>
<keyword id="KW-0472">Membrane</keyword>
<keyword id="KW-0597">Phosphoprotein</keyword>
<keyword id="KW-1185">Reference proteome</keyword>
<keyword id="KW-0677">Repeat</keyword>
<keyword id="KW-0732">Signal</keyword>
<keyword id="KW-0812">Transmembrane</keyword>
<keyword id="KW-1133">Transmembrane helix</keyword>
<accession>Q8K1T1</accession>
<accession>Q3TAD5</accession>
<feature type="signal peptide" evidence="2">
    <location>
        <begin position="1"/>
        <end position="25"/>
    </location>
</feature>
<feature type="chain" id="PRO_0000021614" description="Leucine-rich repeat-containing protein 25">
    <location>
        <begin position="26"/>
        <end position="297"/>
    </location>
</feature>
<feature type="topological domain" description="Extracellular" evidence="2">
    <location>
        <begin position="26"/>
        <end position="169"/>
    </location>
</feature>
<feature type="transmembrane region" description="Helical" evidence="2">
    <location>
        <begin position="170"/>
        <end position="190"/>
    </location>
</feature>
<feature type="topological domain" description="Cytoplasmic" evidence="2">
    <location>
        <begin position="191"/>
        <end position="297"/>
    </location>
</feature>
<feature type="repeat" description="LRR 1">
    <location>
        <begin position="66"/>
        <end position="89"/>
    </location>
</feature>
<feature type="repeat" description="LRR 2">
    <location>
        <begin position="90"/>
        <end position="113"/>
    </location>
</feature>
<feature type="region of interest" description="Disordered" evidence="3">
    <location>
        <begin position="202"/>
        <end position="244"/>
    </location>
</feature>
<feature type="modified residue" description="Phosphoserine" evidence="5">
    <location>
        <position position="211"/>
    </location>
</feature>
<feature type="modified residue" description="Phosphoserine" evidence="5">
    <location>
        <position position="238"/>
    </location>
</feature>
<feature type="modified residue" description="Phosphoserine" evidence="5 6">
    <location>
        <position position="267"/>
    </location>
</feature>
<feature type="modified residue" description="Phosphotyrosine" evidence="4 5">
    <location>
        <position position="289"/>
    </location>
</feature>
<feature type="glycosylation site" description="N-linked (GlcNAc...) asparagine" evidence="2">
    <location>
        <position position="44"/>
    </location>
</feature>
<feature type="glycosylation site" description="N-linked (GlcNAc...) asparagine" evidence="2">
    <location>
        <position position="49"/>
    </location>
</feature>
<feature type="glycosylation site" description="N-linked (GlcNAc...) asparagine" evidence="2">
    <location>
        <position position="133"/>
    </location>
</feature>
<feature type="glycosylation site" description="N-linked (GlcNAc...) asparagine" evidence="2">
    <location>
        <position position="152"/>
    </location>
</feature>
<proteinExistence type="evidence at protein level"/>
<protein>
    <recommendedName>
        <fullName>Leucine-rich repeat-containing protein 25</fullName>
    </recommendedName>
    <alternativeName>
        <fullName>Monocyte and plasmacytoid-activated protein</fullName>
    </alternativeName>
</protein>